<reference key="1">
    <citation type="journal article" date="2001" name="J. Protein Chem.">
        <title>Isolation and enzymatic characterization of a basic phospholipase A2 from Bothrops jararacussu snake venom.</title>
        <authorList>
            <person name="Bonfim V.L."/>
            <person name="Toyama M.H."/>
            <person name="Novello J.C."/>
            <person name="Hyslop S."/>
            <person name="Oliveira C.R.B."/>
            <person name="Rodrigues-Simioni L."/>
            <person name="Marangoni S."/>
        </authorList>
    </citation>
    <scope>PROTEIN SEQUENCE</scope>
    <scope>COFACTOR</scope>
    <scope>ACTIVITY REGULATION</scope>
    <scope>BIOPHYSICOCHEMICAL PROPERTIES</scope>
    <scope>SUBUNIT</scope>
    <source>
        <tissue>Venom</tissue>
    </source>
</reference>
<feature type="chain" id="PRO_0000377502" description="Basic phospholipase A2 BjIV">
    <location>
        <begin position="1"/>
        <end position="21" status="greater than"/>
    </location>
</feature>
<feature type="non-terminal residue">
    <location>
        <position position="21"/>
    </location>
</feature>
<dbReference type="EC" id="3.1.1.4"/>
<dbReference type="GO" id="GO:0005576">
    <property type="term" value="C:extracellular region"/>
    <property type="evidence" value="ECO:0007669"/>
    <property type="project" value="UniProtKB-SubCell"/>
</dbReference>
<dbReference type="GO" id="GO:0046872">
    <property type="term" value="F:metal ion binding"/>
    <property type="evidence" value="ECO:0007669"/>
    <property type="project" value="UniProtKB-KW"/>
</dbReference>
<dbReference type="GO" id="GO:0004623">
    <property type="term" value="F:phospholipase A2 activity"/>
    <property type="evidence" value="ECO:0007669"/>
    <property type="project" value="UniProtKB-EC"/>
</dbReference>
<dbReference type="GO" id="GO:0090729">
    <property type="term" value="F:toxin activity"/>
    <property type="evidence" value="ECO:0007669"/>
    <property type="project" value="UniProtKB-KW"/>
</dbReference>
<dbReference type="GO" id="GO:0016042">
    <property type="term" value="P:lipid catabolic process"/>
    <property type="evidence" value="ECO:0007669"/>
    <property type="project" value="UniProtKB-KW"/>
</dbReference>
<accession>P0CAR8</accession>
<proteinExistence type="evidence at protein level"/>
<keyword id="KW-0106">Calcium</keyword>
<keyword id="KW-0903">Direct protein sequencing</keyword>
<keyword id="KW-1015">Disulfide bond</keyword>
<keyword id="KW-0378">Hydrolase</keyword>
<keyword id="KW-0442">Lipid degradation</keyword>
<keyword id="KW-0443">Lipid metabolism</keyword>
<keyword id="KW-0479">Metal-binding</keyword>
<keyword id="KW-0959">Myotoxin</keyword>
<keyword id="KW-0964">Secreted</keyword>
<keyword id="KW-0800">Toxin</keyword>
<comment type="function">
    <text>Snake venom phospholipase A2 has a high enzymatic activity and produces moderate myonecrosis in skeletal muscle, but shows no neuromuscular activity in mouse phrenic nerve-diaphragm preparations. PLA2 catalyzes the calcium-dependent hydrolysis of the 2-acyl groups in 3-sn-phosphoglycerides.</text>
</comment>
<comment type="catalytic activity">
    <reaction evidence="1 2">
        <text>a 1,2-diacyl-sn-glycero-3-phosphocholine + H2O = a 1-acyl-sn-glycero-3-phosphocholine + a fatty acid + H(+)</text>
        <dbReference type="Rhea" id="RHEA:15801"/>
        <dbReference type="ChEBI" id="CHEBI:15377"/>
        <dbReference type="ChEBI" id="CHEBI:15378"/>
        <dbReference type="ChEBI" id="CHEBI:28868"/>
        <dbReference type="ChEBI" id="CHEBI:57643"/>
        <dbReference type="ChEBI" id="CHEBI:58168"/>
        <dbReference type="EC" id="3.1.1.4"/>
    </reaction>
</comment>
<comment type="cofactor">
    <cofactor evidence="3">
        <name>Ca(2+)</name>
        <dbReference type="ChEBI" id="CHEBI:29108"/>
    </cofactor>
    <text evidence="3">Binds 1 Ca(2+) ion per subunit.</text>
</comment>
<comment type="activity regulation">
    <text evidence="3">Inhibited by crotapotin.</text>
</comment>
<comment type="biophysicochemical properties">
    <kinetics>
        <KM evidence="3">1.7 mM for 4-nitro-3-(octanoyloxy)benzoic acid</KM>
        <Vmax evidence="3">7.2 nmol/min/mg enzyme</Vmax>
    </kinetics>
    <phDependence>
        <text evidence="3">Optimum pH is 8.2.</text>
    </phDependence>
    <temperatureDependence>
        <text evidence="3">Optimum temperature is 35-45 degrees Celsius.</text>
    </temperatureDependence>
</comment>
<comment type="subunit">
    <text evidence="3">Can form dimers, trimers and tetramers.</text>
</comment>
<comment type="subcellular location">
    <subcellularLocation>
        <location>Secreted</location>
    </subcellularLocation>
</comment>
<comment type="tissue specificity">
    <text>Expressed by the venom gland.</text>
</comment>
<comment type="PTM">
    <text>Contains seven disulfide bonds.</text>
</comment>
<comment type="similarity">
    <text evidence="4">Belongs to the phospholipase A2 family. Group II subfamily.</text>
</comment>
<sequence>DLWSWGQMIQETGLLPSYTTY</sequence>
<protein>
    <recommendedName>
        <fullName>Basic phospholipase A2 BjIV</fullName>
        <shortName>svPLA2</shortName>
        <ecNumber>3.1.1.4</ecNumber>
    </recommendedName>
    <alternativeName>
        <fullName>Phosphatidylcholine 2-acylhydrolase</fullName>
    </alternativeName>
</protein>
<evidence type="ECO:0000255" key="1">
    <source>
        <dbReference type="PROSITE-ProRule" id="PRU10035"/>
    </source>
</evidence>
<evidence type="ECO:0000255" key="2">
    <source>
        <dbReference type="PROSITE-ProRule" id="PRU10036"/>
    </source>
</evidence>
<evidence type="ECO:0000269" key="3">
    <source>
    </source>
</evidence>
<evidence type="ECO:0000305" key="4"/>
<organism>
    <name type="scientific">Bothrops jararacussu</name>
    <name type="common">Jararacussu</name>
    <dbReference type="NCBI Taxonomy" id="8726"/>
    <lineage>
        <taxon>Eukaryota</taxon>
        <taxon>Metazoa</taxon>
        <taxon>Chordata</taxon>
        <taxon>Craniata</taxon>
        <taxon>Vertebrata</taxon>
        <taxon>Euteleostomi</taxon>
        <taxon>Lepidosauria</taxon>
        <taxon>Squamata</taxon>
        <taxon>Bifurcata</taxon>
        <taxon>Unidentata</taxon>
        <taxon>Episquamata</taxon>
        <taxon>Toxicofera</taxon>
        <taxon>Serpentes</taxon>
        <taxon>Colubroidea</taxon>
        <taxon>Viperidae</taxon>
        <taxon>Crotalinae</taxon>
        <taxon>Bothrops</taxon>
    </lineage>
</organism>
<name>PA2B_BOTJR</name>